<feature type="signal peptide" evidence="2">
    <location>
        <begin position="1"/>
        <end position="17"/>
    </location>
</feature>
<feature type="chain" id="PRO_0000366103" description="Hg-scorpine-like-2" evidence="6">
    <location>
        <begin position="18"/>
        <end position="101"/>
    </location>
</feature>
<feature type="domain" description="BetaSPN-type CS-alpha/beta" evidence="3">
    <location>
        <begin position="60"/>
        <end position="100"/>
    </location>
</feature>
<feature type="disulfide bond" evidence="3">
    <location>
        <begin position="63"/>
        <end position="87"/>
    </location>
</feature>
<feature type="disulfide bond" evidence="3">
    <location>
        <begin position="73"/>
        <end position="92"/>
    </location>
</feature>
<feature type="disulfide bond" evidence="3">
    <location>
        <begin position="77"/>
        <end position="94"/>
    </location>
</feature>
<reference key="1">
    <citation type="journal article" date="2007" name="BMC Genomics">
        <title>Transcriptome analysis of the venom gland of the Mexican scorpion Hadrurus gertschi (Arachnida: Scorpiones).</title>
        <authorList>
            <person name="Schwartz E.F."/>
            <person name="Diego-Garcia E."/>
            <person name="Rodriguez de la Vega R.C."/>
            <person name="Possani L.D."/>
        </authorList>
    </citation>
    <scope>NUCLEOTIDE SEQUENCE [LARGE SCALE MRNA]</scope>
    <source>
        <tissue>Venom gland</tissue>
    </source>
</reference>
<sequence>MKLTILILLVITSFCSCGILREKYAHKAIDVLTPMIGVPVVSKIVNNAAKQLVHKIAKNQQLCMFNKDVAGWCEKSCQQSAHQKGYCHGTKCKCGIPLNYK</sequence>
<organism>
    <name type="scientific">Hoffmannihadrurus gertschi</name>
    <name type="common">Scorpion</name>
    <name type="synonym">Hadrurus gertschi</name>
    <dbReference type="NCBI Taxonomy" id="380989"/>
    <lineage>
        <taxon>Eukaryota</taxon>
        <taxon>Metazoa</taxon>
        <taxon>Ecdysozoa</taxon>
        <taxon>Arthropoda</taxon>
        <taxon>Chelicerata</taxon>
        <taxon>Arachnida</taxon>
        <taxon>Scorpiones</taxon>
        <taxon>Iurida</taxon>
        <taxon>Iuroidea</taxon>
        <taxon>Hadrurus</taxon>
    </lineage>
</organism>
<keyword id="KW-1015">Disulfide bond</keyword>
<keyword id="KW-0872">Ion channel impairing toxin</keyword>
<keyword id="KW-0632">Potassium channel impairing toxin</keyword>
<keyword id="KW-0964">Secreted</keyword>
<keyword id="KW-0732">Signal</keyword>
<keyword id="KW-0800">Toxin</keyword>
<keyword id="KW-1220">Voltage-gated potassium channel impairing toxin</keyword>
<accession>P0C8W5</accession>
<comment type="function">
    <text evidence="1">Inhibits voltage-gated potassium channels.</text>
</comment>
<comment type="subcellular location">
    <subcellularLocation>
        <location evidence="6">Secreted</location>
    </subcellularLocation>
</comment>
<comment type="tissue specificity">
    <text evidence="6">Expressed by the venom gland.</text>
</comment>
<comment type="similarity">
    <text evidence="5">Belongs to the long chain scorpion toxin family. Class 3 subfamily.</text>
</comment>
<name>KBX32_HOFGE</name>
<dbReference type="EMBL" id="EL698900">
    <property type="status" value="NOT_ANNOTATED_CDS"/>
    <property type="molecule type" value="mRNA"/>
</dbReference>
<dbReference type="SMR" id="P0C8W5"/>
<dbReference type="GO" id="GO:0005576">
    <property type="term" value="C:extracellular region"/>
    <property type="evidence" value="ECO:0007669"/>
    <property type="project" value="UniProtKB-SubCell"/>
</dbReference>
<dbReference type="GO" id="GO:0015459">
    <property type="term" value="F:potassium channel regulator activity"/>
    <property type="evidence" value="ECO:0007669"/>
    <property type="project" value="UniProtKB-KW"/>
</dbReference>
<dbReference type="GO" id="GO:0090729">
    <property type="term" value="F:toxin activity"/>
    <property type="evidence" value="ECO:0007669"/>
    <property type="project" value="UniProtKB-KW"/>
</dbReference>
<dbReference type="InterPro" id="IPR029237">
    <property type="entry name" value="Long_scorpion_toxin_alpha/beta"/>
</dbReference>
<dbReference type="Pfam" id="PF14866">
    <property type="entry name" value="Scorpion_toxin_alpha-beta"/>
    <property type="match status" value="1"/>
</dbReference>
<dbReference type="PROSITE" id="PS51862">
    <property type="entry name" value="BSPN_CSAB"/>
    <property type="match status" value="1"/>
</dbReference>
<evidence type="ECO:0000250" key="1">
    <source>
        <dbReference type="UniProtKB" id="P0DL47"/>
    </source>
</evidence>
<evidence type="ECO:0000255" key="2"/>
<evidence type="ECO:0000255" key="3">
    <source>
        <dbReference type="PROSITE-ProRule" id="PRU01209"/>
    </source>
</evidence>
<evidence type="ECO:0000303" key="4">
    <source>
    </source>
</evidence>
<evidence type="ECO:0000305" key="5"/>
<evidence type="ECO:0000305" key="6">
    <source>
    </source>
</evidence>
<proteinExistence type="inferred from homology"/>
<protein>
    <recommendedName>
        <fullName evidence="4">Hg-scorpine-like-2</fullName>
        <shortName>HgeScplp2</shortName>
        <shortName evidence="4">Hgscplike2</shortName>
    </recommendedName>
</protein>